<comment type="function">
    <text evidence="1">Pathogen-recognition receptor expressed on the surface of immature dendritic cells (DCs) and involved in initiation of primary immune response. Thought to mediate the endocytosis of pathogens which are subsequently degraded in lysosomal compartments. The receptor returns to the cell membrane surface and the pathogen-derived antigens are presented to resting T-cells via MHC class II proteins to initiate the adaptive immune response. Probably recognizes in a calcium-dependent manner high mannose N-linked oligosaccharides in a variety of pathogen antigens (By similarity).</text>
</comment>
<comment type="function">
    <text evidence="1">On DCs it is a high affinity receptor for ICAM2 and ICAM3 by binding to mannose-like carbohydrates. May act as a DC rolling receptor that mediates transendothelial migration of DC presursors from blood to tissues by binding endothelial ICAM2. Seems to regulate DC-induced T-cell proliferation by binding to ICAM3 on T-cells in the immunological synapse formed between DC and T-cells (By similarity).</text>
</comment>
<comment type="subunit">
    <text evidence="2">Homotetramer. Interacts with C1QBP; the interaction is indicative for a C1q:C1QBP:CD209 signaling complex. Interacts with ICAM2 and ICAM3 by binding to mannose-like carbohydrates. Interacts (via C-type lectin domain) with CEACAM1 (via Lewis X moieties); this interaction is regulated by the glycosylation pattern of CEACAM1 on cell types and regulates contact between dendritic cells and neutrophils.</text>
</comment>
<comment type="subcellular location">
    <subcellularLocation>
        <location evidence="1">Membrane</location>
        <topology evidence="1">Single-pass type II membrane protein</topology>
    </subcellularLocation>
</comment>
<comment type="domain">
    <text evidence="1">The tandem repeat domain, also called neck domain, mediates oligomerization.</text>
</comment>
<accession>Q8HY01</accession>
<protein>
    <recommendedName>
        <fullName>CD209 antigen</fullName>
    </recommendedName>
    <alternativeName>
        <fullName>Dendritic cell-specific ICAM-3-grabbing non-integrin 1</fullName>
        <shortName>DC-SIGN1</shortName>
    </alternativeName>
    <cdAntigenName>CD209</cdAntigenName>
</protein>
<evidence type="ECO:0000250" key="1"/>
<evidence type="ECO:0000250" key="2">
    <source>
        <dbReference type="UniProtKB" id="Q9NNX6"/>
    </source>
</evidence>
<evidence type="ECO:0000255" key="3"/>
<evidence type="ECO:0000255" key="4">
    <source>
        <dbReference type="PROSITE-ProRule" id="PRU00040"/>
    </source>
</evidence>
<feature type="chain" id="PRO_0000046596" description="CD209 antigen">
    <location>
        <begin position="1"/>
        <end position="404"/>
    </location>
</feature>
<feature type="topological domain" description="Cytoplasmic" evidence="3">
    <location>
        <begin position="1"/>
        <end position="37"/>
    </location>
</feature>
<feature type="transmembrane region" description="Helical; Signal-anchor for type II membrane protein" evidence="3">
    <location>
        <begin position="38"/>
        <end position="58"/>
    </location>
</feature>
<feature type="topological domain" description="Extracellular" evidence="3">
    <location>
        <begin position="59"/>
        <end position="404"/>
    </location>
</feature>
<feature type="repeat" description="1">
    <location>
        <begin position="96"/>
        <end position="118"/>
    </location>
</feature>
<feature type="repeat" description="2">
    <location>
        <begin position="119"/>
        <end position="141"/>
    </location>
</feature>
<feature type="repeat" description="3">
    <location>
        <begin position="142"/>
        <end position="164"/>
    </location>
</feature>
<feature type="repeat" description="4">
    <location>
        <begin position="165"/>
        <end position="187"/>
    </location>
</feature>
<feature type="repeat" description="5">
    <location>
        <begin position="188"/>
        <end position="210"/>
    </location>
</feature>
<feature type="repeat" description="6">
    <location>
        <begin position="211"/>
        <end position="233"/>
    </location>
</feature>
<feature type="repeat" description="7">
    <location>
        <begin position="234"/>
        <end position="257"/>
    </location>
</feature>
<feature type="domain" description="C-type lectin" evidence="4">
    <location>
        <begin position="263"/>
        <end position="378"/>
    </location>
</feature>
<feature type="region of interest" description="7 X approximate tandem repeats">
    <location>
        <begin position="96"/>
        <end position="257"/>
    </location>
</feature>
<feature type="short sequence motif" description="Endocytosis signal" evidence="1">
    <location>
        <begin position="14"/>
        <end position="15"/>
    </location>
</feature>
<feature type="short sequence motif" description="Endocytosis signal" evidence="3">
    <location>
        <begin position="16"/>
        <end position="18"/>
    </location>
</feature>
<feature type="short sequence motif" description="Endocytosis signal" evidence="3">
    <location>
        <begin position="31"/>
        <end position="34"/>
    </location>
</feature>
<feature type="binding site" evidence="1">
    <location>
        <position position="347"/>
    </location>
    <ligand>
        <name>Ca(2+)</name>
        <dbReference type="ChEBI" id="CHEBI:29108"/>
    </ligand>
</feature>
<feature type="binding site" evidence="1">
    <location>
        <position position="349"/>
    </location>
    <ligand>
        <name>Ca(2+)</name>
        <dbReference type="ChEBI" id="CHEBI:29108"/>
    </ligand>
</feature>
<feature type="binding site" evidence="1">
    <location>
        <position position="351"/>
    </location>
    <ligand>
        <name>Ca(2+)</name>
        <dbReference type="ChEBI" id="CHEBI:29108"/>
    </ligand>
</feature>
<feature type="binding site" evidence="1">
    <location>
        <position position="354"/>
    </location>
    <ligand>
        <name>Ca(2+)</name>
        <dbReference type="ChEBI" id="CHEBI:29108"/>
    </ligand>
</feature>
<feature type="binding site" evidence="1">
    <location>
        <position position="365"/>
    </location>
    <ligand>
        <name>Ca(2+)</name>
        <dbReference type="ChEBI" id="CHEBI:29108"/>
    </ligand>
</feature>
<feature type="binding site" evidence="1">
    <location>
        <position position="366"/>
    </location>
    <ligand>
        <name>Ca(2+)</name>
        <dbReference type="ChEBI" id="CHEBI:29108"/>
    </ligand>
</feature>
<feature type="glycosylation site" description="N-linked (GlcNAc...) asparagine" evidence="3">
    <location>
        <position position="80"/>
    </location>
</feature>
<feature type="disulfide bond" evidence="4">
    <location>
        <begin position="256"/>
        <end position="267"/>
    </location>
</feature>
<feature type="disulfide bond" evidence="4">
    <location>
        <begin position="284"/>
        <end position="377"/>
    </location>
</feature>
<feature type="disulfide bond" evidence="4">
    <location>
        <begin position="356"/>
        <end position="369"/>
    </location>
</feature>
<reference key="1">
    <citation type="journal article" date="2003" name="J. Virol.">
        <title>Novel member of the CD209 (DC-SIGN) gene family in primates.</title>
        <authorList>
            <person name="Bashirova A.A."/>
            <person name="Wu L."/>
            <person name="Cheng J."/>
            <person name="Martin T.D."/>
            <person name="Martin M.P."/>
            <person name="Benveniste R.E."/>
            <person name="Lifson J.D."/>
            <person name="Kewalramani V.N."/>
            <person name="Hughes A."/>
            <person name="Carrington M."/>
        </authorList>
    </citation>
    <scope>NUCLEOTIDE SEQUENCE [GENOMIC DNA]</scope>
    <source>
        <strain>Isolate B128</strain>
    </source>
</reference>
<name>CD209_NOMCO</name>
<proteinExistence type="inferred from homology"/>
<keyword id="KW-1064">Adaptive immunity</keyword>
<keyword id="KW-0106">Calcium</keyword>
<keyword id="KW-0130">Cell adhesion</keyword>
<keyword id="KW-1015">Disulfide bond</keyword>
<keyword id="KW-0254">Endocytosis</keyword>
<keyword id="KW-0325">Glycoprotein</keyword>
<keyword id="KW-0391">Immunity</keyword>
<keyword id="KW-0399">Innate immunity</keyword>
<keyword id="KW-0430">Lectin</keyword>
<keyword id="KW-0465">Mannose-binding</keyword>
<keyword id="KW-0472">Membrane</keyword>
<keyword id="KW-0479">Metal-binding</keyword>
<keyword id="KW-0675">Receptor</keyword>
<keyword id="KW-0677">Repeat</keyword>
<keyword id="KW-0735">Signal-anchor</keyword>
<keyword id="KW-0812">Transmembrane</keyword>
<keyword id="KW-1133">Transmembrane helix</keyword>
<dbReference type="EMBL" id="AY078891">
    <property type="protein sequence ID" value="AAL89540.1"/>
    <property type="molecule type" value="Genomic_DNA"/>
</dbReference>
<dbReference type="EMBL" id="AY078885">
    <property type="protein sequence ID" value="AAL89540.1"/>
    <property type="status" value="JOINED"/>
    <property type="molecule type" value="Genomic_DNA"/>
</dbReference>
<dbReference type="EMBL" id="AY078886">
    <property type="protein sequence ID" value="AAL89540.1"/>
    <property type="status" value="JOINED"/>
    <property type="molecule type" value="Genomic_DNA"/>
</dbReference>
<dbReference type="EMBL" id="AY078887">
    <property type="protein sequence ID" value="AAL89540.1"/>
    <property type="status" value="JOINED"/>
    <property type="molecule type" value="Genomic_DNA"/>
</dbReference>
<dbReference type="EMBL" id="AY078888">
    <property type="protein sequence ID" value="AAL89540.1"/>
    <property type="status" value="JOINED"/>
    <property type="molecule type" value="Genomic_DNA"/>
</dbReference>
<dbReference type="EMBL" id="AY078889">
    <property type="protein sequence ID" value="AAL89540.1"/>
    <property type="status" value="JOINED"/>
    <property type="molecule type" value="Genomic_DNA"/>
</dbReference>
<dbReference type="EMBL" id="AY078890">
    <property type="protein sequence ID" value="AAL89540.1"/>
    <property type="status" value="JOINED"/>
    <property type="molecule type" value="Genomic_DNA"/>
</dbReference>
<dbReference type="SMR" id="Q8HY01"/>
<dbReference type="GlyCosmos" id="Q8HY01">
    <property type="glycosylation" value="1 site, No reported glycans"/>
</dbReference>
<dbReference type="GO" id="GO:0016020">
    <property type="term" value="C:membrane"/>
    <property type="evidence" value="ECO:0007669"/>
    <property type="project" value="UniProtKB-SubCell"/>
</dbReference>
<dbReference type="GO" id="GO:0005537">
    <property type="term" value="F:D-mannose binding"/>
    <property type="evidence" value="ECO:0007669"/>
    <property type="project" value="UniProtKB-KW"/>
</dbReference>
<dbReference type="GO" id="GO:0046872">
    <property type="term" value="F:metal ion binding"/>
    <property type="evidence" value="ECO:0007669"/>
    <property type="project" value="UniProtKB-KW"/>
</dbReference>
<dbReference type="GO" id="GO:0002250">
    <property type="term" value="P:adaptive immune response"/>
    <property type="evidence" value="ECO:0007669"/>
    <property type="project" value="UniProtKB-KW"/>
</dbReference>
<dbReference type="GO" id="GO:0007155">
    <property type="term" value="P:cell adhesion"/>
    <property type="evidence" value="ECO:0007669"/>
    <property type="project" value="UniProtKB-KW"/>
</dbReference>
<dbReference type="GO" id="GO:0006897">
    <property type="term" value="P:endocytosis"/>
    <property type="evidence" value="ECO:0007669"/>
    <property type="project" value="UniProtKB-KW"/>
</dbReference>
<dbReference type="GO" id="GO:0045087">
    <property type="term" value="P:innate immune response"/>
    <property type="evidence" value="ECO:0007669"/>
    <property type="project" value="UniProtKB-KW"/>
</dbReference>
<dbReference type="CDD" id="cd03590">
    <property type="entry name" value="CLECT_DC-SIGN_like"/>
    <property type="match status" value="1"/>
</dbReference>
<dbReference type="FunFam" id="3.10.100.10:FF:000044">
    <property type="entry name" value="CD209 antigen, isoform CRA_b"/>
    <property type="match status" value="1"/>
</dbReference>
<dbReference type="Gene3D" id="3.10.100.10">
    <property type="entry name" value="Mannose-Binding Protein A, subunit A"/>
    <property type="match status" value="1"/>
</dbReference>
<dbReference type="InterPro" id="IPR001304">
    <property type="entry name" value="C-type_lectin-like"/>
</dbReference>
<dbReference type="InterPro" id="IPR016186">
    <property type="entry name" value="C-type_lectin-like/link_sf"/>
</dbReference>
<dbReference type="InterPro" id="IPR050111">
    <property type="entry name" value="C-type_lectin/snaclec_domain"/>
</dbReference>
<dbReference type="InterPro" id="IPR018378">
    <property type="entry name" value="C-type_lectin_CS"/>
</dbReference>
<dbReference type="InterPro" id="IPR033989">
    <property type="entry name" value="CD209-like_CTLD"/>
</dbReference>
<dbReference type="InterPro" id="IPR016187">
    <property type="entry name" value="CTDL_fold"/>
</dbReference>
<dbReference type="PANTHER" id="PTHR22803">
    <property type="entry name" value="MANNOSE, PHOSPHOLIPASE, LECTIN RECEPTOR RELATED"/>
    <property type="match status" value="1"/>
</dbReference>
<dbReference type="Pfam" id="PF00059">
    <property type="entry name" value="Lectin_C"/>
    <property type="match status" value="1"/>
</dbReference>
<dbReference type="SMART" id="SM00034">
    <property type="entry name" value="CLECT"/>
    <property type="match status" value="1"/>
</dbReference>
<dbReference type="SUPFAM" id="SSF56436">
    <property type="entry name" value="C-type lectin-like"/>
    <property type="match status" value="1"/>
</dbReference>
<dbReference type="PROSITE" id="PS00615">
    <property type="entry name" value="C_TYPE_LECTIN_1"/>
    <property type="match status" value="1"/>
</dbReference>
<dbReference type="PROSITE" id="PS50041">
    <property type="entry name" value="C_TYPE_LECTIN_2"/>
    <property type="match status" value="1"/>
</dbReference>
<organism>
    <name type="scientific">Nomascus concolor</name>
    <name type="common">Black crested gibbon</name>
    <name type="synonym">Hylobates concolor</name>
    <dbReference type="NCBI Taxonomy" id="29089"/>
    <lineage>
        <taxon>Eukaryota</taxon>
        <taxon>Metazoa</taxon>
        <taxon>Chordata</taxon>
        <taxon>Craniata</taxon>
        <taxon>Vertebrata</taxon>
        <taxon>Euteleostomi</taxon>
        <taxon>Mammalia</taxon>
        <taxon>Eutheria</taxon>
        <taxon>Euarchontoglires</taxon>
        <taxon>Primates</taxon>
        <taxon>Haplorrhini</taxon>
        <taxon>Catarrhini</taxon>
        <taxon>Hylobatidae</taxon>
        <taxon>Nomascus</taxon>
    </lineage>
</organism>
<gene>
    <name type="primary">CD209</name>
</gene>
<sequence>MSDSKEPSVQQLGLLEEEQLRGLGFRQTRGYKSLAGCLGHGALVLQLLSFTLLAGLLIQVSKFPSSISQEQSKQDAIYQNLTQLKAAVGELSEKSKLQEIYQELTQLKAAVGELPEKSKQQEIYQELTQLKAAVGELPEKSKQQEIYQELTQLKAAVGELPEKSKQQEIYQELTRLKAAVGELPEKSQQQEIYQELTQLKAAVGELPEKSKQQEIYQELTRLKAAVGELPEKSKQQEIYQELTQLKAAVERLCRPCPWEWTFFQGNCYFMSNSQRDWHDSVTACQEVGAQLVVIKSAEEQNFLQLQSSRSNRFAWMGLSDLNQEGTWQWVDGSPLSPSFKQYWNRGEPNNVGEEDCAEFSGNGWNDDKCNLAKFWICKKSAASCSRDEEQFLSPAPATPNPPPA</sequence>